<name>Y1746_DICDI</name>
<evidence type="ECO:0000256" key="1">
    <source>
        <dbReference type="SAM" id="MobiDB-lite"/>
    </source>
</evidence>
<proteinExistence type="predicted"/>
<keyword id="KW-1185">Reference proteome</keyword>
<feature type="chain" id="PRO_0000344390" description="Uncharacterized protein DDB_G0293048">
    <location>
        <begin position="1"/>
        <end position="96"/>
    </location>
</feature>
<feature type="region of interest" description="Disordered" evidence="1">
    <location>
        <begin position="35"/>
        <end position="96"/>
    </location>
</feature>
<feature type="compositionally biased region" description="Basic and acidic residues" evidence="1">
    <location>
        <begin position="38"/>
        <end position="52"/>
    </location>
</feature>
<feature type="compositionally biased region" description="Polar residues" evidence="1">
    <location>
        <begin position="69"/>
        <end position="80"/>
    </location>
</feature>
<sequence>MSDTLLDLDFETTAQNPNSNEILPLGTEALIIYNSPSGEKRSTKNQTKENTKNDTGSLFDDLGIKDHTANQQTNENSKPLSDSEILKKFSSPPHPK</sequence>
<gene>
    <name type="ORF">DDB_G0293048</name>
</gene>
<organism>
    <name type="scientific">Dictyostelium discoideum</name>
    <name type="common">Social amoeba</name>
    <dbReference type="NCBI Taxonomy" id="44689"/>
    <lineage>
        <taxon>Eukaryota</taxon>
        <taxon>Amoebozoa</taxon>
        <taxon>Evosea</taxon>
        <taxon>Eumycetozoa</taxon>
        <taxon>Dictyostelia</taxon>
        <taxon>Dictyosteliales</taxon>
        <taxon>Dictyosteliaceae</taxon>
        <taxon>Dictyostelium</taxon>
    </lineage>
</organism>
<accession>Q54CC7</accession>
<dbReference type="EMBL" id="AAFI02000199">
    <property type="protein sequence ID" value="EAL60876.1"/>
    <property type="molecule type" value="Genomic_DNA"/>
</dbReference>
<dbReference type="RefSeq" id="XP_629292.1">
    <property type="nucleotide sequence ID" value="XM_629290.1"/>
</dbReference>
<dbReference type="SMR" id="Q54CC7"/>
<dbReference type="FunCoup" id="Q54CC7">
    <property type="interactions" value="362"/>
</dbReference>
<dbReference type="PaxDb" id="44689-DDB0191746"/>
<dbReference type="EnsemblProtists" id="EAL60876">
    <property type="protein sequence ID" value="EAL60876"/>
    <property type="gene ID" value="DDB_G0293048"/>
</dbReference>
<dbReference type="GeneID" id="8629015"/>
<dbReference type="KEGG" id="ddi:DDB_G0293048"/>
<dbReference type="dictyBase" id="DDB_G0293048"/>
<dbReference type="VEuPathDB" id="AmoebaDB:DDB_G0293048"/>
<dbReference type="eggNOG" id="ENOG502RICX">
    <property type="taxonomic scope" value="Eukaryota"/>
</dbReference>
<dbReference type="HOGENOM" id="CLU_2364052_0_0_1"/>
<dbReference type="InParanoid" id="Q54CC7"/>
<dbReference type="OMA" id="DHTANQQ"/>
<dbReference type="PRO" id="PR:Q54CC7"/>
<dbReference type="Proteomes" id="UP000002195">
    <property type="component" value="Chromosome 6"/>
</dbReference>
<reference key="1">
    <citation type="journal article" date="2005" name="Nature">
        <title>The genome of the social amoeba Dictyostelium discoideum.</title>
        <authorList>
            <person name="Eichinger L."/>
            <person name="Pachebat J.A."/>
            <person name="Gloeckner G."/>
            <person name="Rajandream M.A."/>
            <person name="Sucgang R."/>
            <person name="Berriman M."/>
            <person name="Song J."/>
            <person name="Olsen R."/>
            <person name="Szafranski K."/>
            <person name="Xu Q."/>
            <person name="Tunggal B."/>
            <person name="Kummerfeld S."/>
            <person name="Madera M."/>
            <person name="Konfortov B.A."/>
            <person name="Rivero F."/>
            <person name="Bankier A.T."/>
            <person name="Lehmann R."/>
            <person name="Hamlin N."/>
            <person name="Davies R."/>
            <person name="Gaudet P."/>
            <person name="Fey P."/>
            <person name="Pilcher K."/>
            <person name="Chen G."/>
            <person name="Saunders D."/>
            <person name="Sodergren E.J."/>
            <person name="Davis P."/>
            <person name="Kerhornou A."/>
            <person name="Nie X."/>
            <person name="Hall N."/>
            <person name="Anjard C."/>
            <person name="Hemphill L."/>
            <person name="Bason N."/>
            <person name="Farbrother P."/>
            <person name="Desany B."/>
            <person name="Just E."/>
            <person name="Morio T."/>
            <person name="Rost R."/>
            <person name="Churcher C.M."/>
            <person name="Cooper J."/>
            <person name="Haydock S."/>
            <person name="van Driessche N."/>
            <person name="Cronin A."/>
            <person name="Goodhead I."/>
            <person name="Muzny D.M."/>
            <person name="Mourier T."/>
            <person name="Pain A."/>
            <person name="Lu M."/>
            <person name="Harper D."/>
            <person name="Lindsay R."/>
            <person name="Hauser H."/>
            <person name="James K.D."/>
            <person name="Quiles M."/>
            <person name="Madan Babu M."/>
            <person name="Saito T."/>
            <person name="Buchrieser C."/>
            <person name="Wardroper A."/>
            <person name="Felder M."/>
            <person name="Thangavelu M."/>
            <person name="Johnson D."/>
            <person name="Knights A."/>
            <person name="Loulseged H."/>
            <person name="Mungall K.L."/>
            <person name="Oliver K."/>
            <person name="Price C."/>
            <person name="Quail M.A."/>
            <person name="Urushihara H."/>
            <person name="Hernandez J."/>
            <person name="Rabbinowitsch E."/>
            <person name="Steffen D."/>
            <person name="Sanders M."/>
            <person name="Ma J."/>
            <person name="Kohara Y."/>
            <person name="Sharp S."/>
            <person name="Simmonds M.N."/>
            <person name="Spiegler S."/>
            <person name="Tivey A."/>
            <person name="Sugano S."/>
            <person name="White B."/>
            <person name="Walker D."/>
            <person name="Woodward J.R."/>
            <person name="Winckler T."/>
            <person name="Tanaka Y."/>
            <person name="Shaulsky G."/>
            <person name="Schleicher M."/>
            <person name="Weinstock G.M."/>
            <person name="Rosenthal A."/>
            <person name="Cox E.C."/>
            <person name="Chisholm R.L."/>
            <person name="Gibbs R.A."/>
            <person name="Loomis W.F."/>
            <person name="Platzer M."/>
            <person name="Kay R.R."/>
            <person name="Williams J.G."/>
            <person name="Dear P.H."/>
            <person name="Noegel A.A."/>
            <person name="Barrell B.G."/>
            <person name="Kuspa A."/>
        </authorList>
    </citation>
    <scope>NUCLEOTIDE SEQUENCE [LARGE SCALE GENOMIC DNA]</scope>
    <source>
        <strain>AX4</strain>
    </source>
</reference>
<protein>
    <recommendedName>
        <fullName>Uncharacterized protein DDB_G0293048</fullName>
    </recommendedName>
</protein>